<evidence type="ECO:0000255" key="1">
    <source>
        <dbReference type="PROSITE-ProRule" id="PRU00417"/>
    </source>
</evidence>
<evidence type="ECO:0000269" key="2">
    <source>
    </source>
</evidence>
<evidence type="ECO:0000303" key="3">
    <source>
    </source>
</evidence>
<evidence type="ECO:0000303" key="4">
    <source>
    </source>
</evidence>
<evidence type="ECO:0000305" key="5"/>
<gene>
    <name evidence="3" type="primary">ptfA</name>
    <name type="synonym">fruA2</name>
    <name type="ordered locus">HVO_1498</name>
    <name type="ORF">C498_11241</name>
</gene>
<comment type="function">
    <text evidence="2">The phosphoenolpyruvate-dependent sugar phosphotransferase system (sugar PTS), a major carbohydrate active transport system, catalyzes the phosphorylation of incoming sugar substrates concomitantly with their translocation across the cell membrane. The enzyme II PtfABC PTS system is involved in fructose transport.</text>
</comment>
<comment type="subcellular location">
    <subcellularLocation>
        <location evidence="5">Cytoplasm</location>
    </subcellularLocation>
</comment>
<comment type="induction">
    <text evidence="2">Expression is highly up-regulated in presence of fructose.</text>
</comment>
<comment type="domain">
    <text evidence="1">The PTS EIIA type-2 domain is phosphorylated by phospho-HPr on a histidyl residue. Then, it transfers the phosphoryl group to the PTS EIIB type-2 domain.</text>
</comment>
<comment type="miscellaneous">
    <text evidence="5">PTS-type transport systems are very rare in archaea.</text>
</comment>
<protein>
    <recommendedName>
        <fullName evidence="4">PTS system fructose-specific EIIA component</fullName>
    </recommendedName>
    <alternativeName>
        <fullName evidence="4">EIIA-Fru</fullName>
    </alternativeName>
    <alternativeName>
        <fullName evidence="4">Fructose-specific phosphotransferase enzyme IIA component</fullName>
    </alternativeName>
</protein>
<reference key="1">
    <citation type="journal article" date="2010" name="PLoS ONE">
        <title>The complete genome sequence of Haloferax volcanii DS2, a model archaeon.</title>
        <authorList>
            <person name="Hartman A.L."/>
            <person name="Norais C."/>
            <person name="Badger J.H."/>
            <person name="Delmas S."/>
            <person name="Haldenby S."/>
            <person name="Madupu R."/>
            <person name="Robinson J."/>
            <person name="Khouri H."/>
            <person name="Ren Q."/>
            <person name="Lowe T.M."/>
            <person name="Maupin-Furlow J."/>
            <person name="Pohlschroder M."/>
            <person name="Daniels C."/>
            <person name="Pfeiffer F."/>
            <person name="Allers T."/>
            <person name="Eisen J.A."/>
        </authorList>
    </citation>
    <scope>NUCLEOTIDE SEQUENCE [LARGE SCALE GENOMIC DNA]</scope>
    <source>
        <strain>ATCC 29605 / DSM 3757 / JCM 8879 / NBRC 14742 / NCIMB 2012 / VKM B-1768 / DS2</strain>
    </source>
</reference>
<reference key="2">
    <citation type="journal article" date="2014" name="PLoS Genet.">
        <title>Phylogenetically driven sequencing of extremely halophilic archaea reveals strategies for static and dynamic osmo-response.</title>
        <authorList>
            <person name="Becker E.A."/>
            <person name="Seitzer P.M."/>
            <person name="Tritt A."/>
            <person name="Larsen D."/>
            <person name="Krusor M."/>
            <person name="Yao A.I."/>
            <person name="Wu D."/>
            <person name="Madern D."/>
            <person name="Eisen J.A."/>
            <person name="Darling A.E."/>
            <person name="Facciotti M.T."/>
        </authorList>
    </citation>
    <scope>NUCLEOTIDE SEQUENCE [LARGE SCALE GENOMIC DNA]</scope>
    <source>
        <strain>ATCC 29605 / DSM 3757 / JCM 8879 / NBRC 14742 / NCIMB 2012 / VKM B-1768 / DS2</strain>
    </source>
</reference>
<reference key="3">
    <citation type="journal article" date="2012" name="J. Bacteriol.">
        <title>Fructose degradation in the haloarchaeon Haloferax volcanii involves a bacterial type phosphoenolpyruvate-dependent phosphotransferase system, fructose-1-phosphate kinase, and class II fructose-1,6-bisphosphate aldolase.</title>
        <authorList>
            <person name="Pickl A."/>
            <person name="Johnsen U."/>
            <person name="Schoenheit P."/>
        </authorList>
    </citation>
    <scope>IDENTIFICATION</scope>
    <scope>FUNCTION</scope>
    <scope>INDUCTION</scope>
    <source>
        <strain>DS2 / DS70</strain>
    </source>
</reference>
<name>PTFA_HALVD</name>
<accession>D4GYE4</accession>
<feature type="chain" id="PRO_0000428982" description="PTS system fructose-specific EIIA component">
    <location>
        <begin position="1"/>
        <end position="154"/>
    </location>
</feature>
<feature type="domain" description="PTS EIIA type-2" evidence="1">
    <location>
        <begin position="8"/>
        <end position="152"/>
    </location>
</feature>
<feature type="active site" description="Tele-phosphohistidine intermediate" evidence="1">
    <location>
        <position position="70"/>
    </location>
</feature>
<feature type="modified residue" description="Phosphohistidine; by HPr" evidence="5">
    <location>
        <position position="70"/>
    </location>
</feature>
<dbReference type="EMBL" id="CP001956">
    <property type="protein sequence ID" value="ADE03077.1"/>
    <property type="molecule type" value="Genomic_DNA"/>
</dbReference>
<dbReference type="EMBL" id="AOHU01000090">
    <property type="protein sequence ID" value="ELY28264.1"/>
    <property type="molecule type" value="Genomic_DNA"/>
</dbReference>
<dbReference type="RefSeq" id="WP_004043437.1">
    <property type="nucleotide sequence ID" value="NC_013967.1"/>
</dbReference>
<dbReference type="SMR" id="D4GYE4"/>
<dbReference type="STRING" id="309800.HVO_1498"/>
<dbReference type="TCDB" id="4.A.2.1.15">
    <property type="family name" value="the pts fructose-mannitol (fru) family"/>
</dbReference>
<dbReference type="PaxDb" id="309800-C498_11241"/>
<dbReference type="EnsemblBacteria" id="ADE03077">
    <property type="protein sequence ID" value="ADE03077"/>
    <property type="gene ID" value="HVO_1498"/>
</dbReference>
<dbReference type="GeneID" id="8925300"/>
<dbReference type="KEGG" id="hvo:HVO_1498"/>
<dbReference type="PATRIC" id="fig|309800.29.peg.2142"/>
<dbReference type="eggNOG" id="arCOG10195">
    <property type="taxonomic scope" value="Archaea"/>
</dbReference>
<dbReference type="HOGENOM" id="CLU_072531_5_0_2"/>
<dbReference type="OrthoDB" id="177320at2157"/>
<dbReference type="Proteomes" id="UP000008243">
    <property type="component" value="Chromosome"/>
</dbReference>
<dbReference type="Proteomes" id="UP000011532">
    <property type="component" value="Unassembled WGS sequence"/>
</dbReference>
<dbReference type="GO" id="GO:0005737">
    <property type="term" value="C:cytoplasm"/>
    <property type="evidence" value="ECO:0007669"/>
    <property type="project" value="UniProtKB-SubCell"/>
</dbReference>
<dbReference type="GO" id="GO:0016020">
    <property type="term" value="C:membrane"/>
    <property type="evidence" value="ECO:0007669"/>
    <property type="project" value="InterPro"/>
</dbReference>
<dbReference type="GO" id="GO:0016301">
    <property type="term" value="F:kinase activity"/>
    <property type="evidence" value="ECO:0007669"/>
    <property type="project" value="UniProtKB-KW"/>
</dbReference>
<dbReference type="GO" id="GO:0008982">
    <property type="term" value="F:protein-N(PI)-phosphohistidine-sugar phosphotransferase activity"/>
    <property type="evidence" value="ECO:0007669"/>
    <property type="project" value="InterPro"/>
</dbReference>
<dbReference type="GO" id="GO:0009401">
    <property type="term" value="P:phosphoenolpyruvate-dependent sugar phosphotransferase system"/>
    <property type="evidence" value="ECO:0007669"/>
    <property type="project" value="UniProtKB-KW"/>
</dbReference>
<dbReference type="CDD" id="cd00211">
    <property type="entry name" value="PTS_IIA_fru"/>
    <property type="match status" value="1"/>
</dbReference>
<dbReference type="FunFam" id="3.40.930.10:FF:000009">
    <property type="entry name" value="PTS system, fructose specific IIABC component"/>
    <property type="match status" value="1"/>
</dbReference>
<dbReference type="Gene3D" id="3.40.930.10">
    <property type="entry name" value="Mannitol-specific EII, Chain A"/>
    <property type="match status" value="1"/>
</dbReference>
<dbReference type="InterPro" id="IPR016152">
    <property type="entry name" value="PTrfase/Anion_transptr"/>
</dbReference>
<dbReference type="InterPro" id="IPR002178">
    <property type="entry name" value="PTS_EIIA_type-2_dom"/>
</dbReference>
<dbReference type="InterPro" id="IPR004715">
    <property type="entry name" value="PTS_IIA_fruc"/>
</dbReference>
<dbReference type="InterPro" id="IPR051541">
    <property type="entry name" value="PTS_SugarTrans_NitroReg"/>
</dbReference>
<dbReference type="NCBIfam" id="TIGR00848">
    <property type="entry name" value="fruA"/>
    <property type="match status" value="1"/>
</dbReference>
<dbReference type="PANTHER" id="PTHR47738">
    <property type="entry name" value="PTS SYSTEM FRUCTOSE-LIKE EIIA COMPONENT-RELATED"/>
    <property type="match status" value="1"/>
</dbReference>
<dbReference type="Pfam" id="PF00359">
    <property type="entry name" value="PTS_EIIA_2"/>
    <property type="match status" value="1"/>
</dbReference>
<dbReference type="SUPFAM" id="SSF55804">
    <property type="entry name" value="Phoshotransferase/anion transport protein"/>
    <property type="match status" value="1"/>
</dbReference>
<dbReference type="PROSITE" id="PS51094">
    <property type="entry name" value="PTS_EIIA_TYPE_2"/>
    <property type="match status" value="1"/>
</dbReference>
<keyword id="KW-0963">Cytoplasm</keyword>
<keyword id="KW-0418">Kinase</keyword>
<keyword id="KW-0597">Phosphoprotein</keyword>
<keyword id="KW-0598">Phosphotransferase system</keyword>
<keyword id="KW-1185">Reference proteome</keyword>
<keyword id="KW-0762">Sugar transport</keyword>
<keyword id="KW-0808">Transferase</keyword>
<keyword id="KW-0813">Transport</keyword>
<sequence>MDVTDISTITPLELISLEEPPATKEGAIEFLLDLAVDAGRVDDRDAALDALLEREGEATTGVGFGIGIPHAKTDAVSKPTVAFARSAEGIDFDAMDDKPAKLLFMILVPAAGGEDHLQILSALSRSLMHEDVREKLLEAESKQTVQDVLAEVVE</sequence>
<organism>
    <name type="scientific">Haloferax volcanii (strain ATCC 29605 / DSM 3757 / JCM 8879 / NBRC 14742 / NCIMB 2012 / VKM B-1768 / DS2)</name>
    <name type="common">Halobacterium volcanii</name>
    <dbReference type="NCBI Taxonomy" id="309800"/>
    <lineage>
        <taxon>Archaea</taxon>
        <taxon>Methanobacteriati</taxon>
        <taxon>Methanobacteriota</taxon>
        <taxon>Stenosarchaea group</taxon>
        <taxon>Halobacteria</taxon>
        <taxon>Halobacteriales</taxon>
        <taxon>Haloferacaceae</taxon>
        <taxon>Haloferax</taxon>
    </lineage>
</organism>
<proteinExistence type="evidence at transcript level"/>